<protein>
    <recommendedName>
        <fullName>Putative asparagine synthetase [glutamine-hydrolyzing] 2</fullName>
        <ecNumber>6.3.5.4</ecNumber>
    </recommendedName>
</protein>
<dbReference type="EC" id="6.3.5.4"/>
<dbReference type="EMBL" id="L77117">
    <property type="protein sequence ID" value="AAB99058.1"/>
    <property type="status" value="ALT_INIT"/>
    <property type="molecule type" value="Genomic_DNA"/>
</dbReference>
<dbReference type="PIR" id="G64431">
    <property type="entry name" value="G64431"/>
</dbReference>
<dbReference type="SMR" id="Q58456"/>
<dbReference type="FunCoup" id="Q58456">
    <property type="interactions" value="93"/>
</dbReference>
<dbReference type="STRING" id="243232.MJ_1056"/>
<dbReference type="MEROPS" id="C44.001"/>
<dbReference type="PaxDb" id="243232-MJ_1056"/>
<dbReference type="EnsemblBacteria" id="AAB99058">
    <property type="protein sequence ID" value="AAB99058"/>
    <property type="gene ID" value="MJ_1056"/>
</dbReference>
<dbReference type="KEGG" id="mja:MJ_1056"/>
<dbReference type="eggNOG" id="arCOG00071">
    <property type="taxonomic scope" value="Archaea"/>
</dbReference>
<dbReference type="HOGENOM" id="CLU_014658_3_1_2"/>
<dbReference type="InParanoid" id="Q58456"/>
<dbReference type="PhylomeDB" id="Q58456"/>
<dbReference type="UniPathway" id="UPA00134">
    <property type="reaction ID" value="UER00195"/>
</dbReference>
<dbReference type="Proteomes" id="UP000000805">
    <property type="component" value="Chromosome"/>
</dbReference>
<dbReference type="GO" id="GO:0005829">
    <property type="term" value="C:cytosol"/>
    <property type="evidence" value="ECO:0000318"/>
    <property type="project" value="GO_Central"/>
</dbReference>
<dbReference type="GO" id="GO:0004066">
    <property type="term" value="F:asparagine synthase (glutamine-hydrolyzing) activity"/>
    <property type="evidence" value="ECO:0000318"/>
    <property type="project" value="GO_Central"/>
</dbReference>
<dbReference type="GO" id="GO:0005524">
    <property type="term" value="F:ATP binding"/>
    <property type="evidence" value="ECO:0007669"/>
    <property type="project" value="UniProtKB-KW"/>
</dbReference>
<dbReference type="GO" id="GO:0006529">
    <property type="term" value="P:asparagine biosynthetic process"/>
    <property type="evidence" value="ECO:0000318"/>
    <property type="project" value="GO_Central"/>
</dbReference>
<dbReference type="GO" id="GO:0070981">
    <property type="term" value="P:L-asparagine biosynthetic process"/>
    <property type="evidence" value="ECO:0007669"/>
    <property type="project" value="UniProtKB-UniPathway"/>
</dbReference>
<dbReference type="CDD" id="cd01991">
    <property type="entry name" value="Asn_synthase_B_C"/>
    <property type="match status" value="1"/>
</dbReference>
<dbReference type="CDD" id="cd00712">
    <property type="entry name" value="AsnB"/>
    <property type="match status" value="1"/>
</dbReference>
<dbReference type="Gene3D" id="3.60.20.10">
    <property type="entry name" value="Glutamine Phosphoribosylpyrophosphate, subunit 1, domain 1"/>
    <property type="match status" value="1"/>
</dbReference>
<dbReference type="Gene3D" id="3.40.50.620">
    <property type="entry name" value="HUPs"/>
    <property type="match status" value="1"/>
</dbReference>
<dbReference type="InterPro" id="IPR006426">
    <property type="entry name" value="Asn_synth_AEB"/>
</dbReference>
<dbReference type="InterPro" id="IPR001962">
    <property type="entry name" value="Asn_synthase"/>
</dbReference>
<dbReference type="InterPro" id="IPR051786">
    <property type="entry name" value="ASN_synthetase/amidase"/>
</dbReference>
<dbReference type="InterPro" id="IPR033738">
    <property type="entry name" value="AsnB_N"/>
</dbReference>
<dbReference type="InterPro" id="IPR017932">
    <property type="entry name" value="GATase_2_dom"/>
</dbReference>
<dbReference type="InterPro" id="IPR029055">
    <property type="entry name" value="Ntn_hydrolases_N"/>
</dbReference>
<dbReference type="InterPro" id="IPR014729">
    <property type="entry name" value="Rossmann-like_a/b/a_fold"/>
</dbReference>
<dbReference type="NCBIfam" id="TIGR01536">
    <property type="entry name" value="asn_synth_AEB"/>
    <property type="match status" value="1"/>
</dbReference>
<dbReference type="PANTHER" id="PTHR43284:SF1">
    <property type="entry name" value="ASPARAGINE SYNTHETASE"/>
    <property type="match status" value="1"/>
</dbReference>
<dbReference type="PANTHER" id="PTHR43284">
    <property type="entry name" value="ASPARAGINE SYNTHETASE (GLUTAMINE-HYDROLYZING)"/>
    <property type="match status" value="1"/>
</dbReference>
<dbReference type="Pfam" id="PF00733">
    <property type="entry name" value="Asn_synthase"/>
    <property type="match status" value="1"/>
</dbReference>
<dbReference type="Pfam" id="PF13537">
    <property type="entry name" value="GATase_7"/>
    <property type="match status" value="1"/>
</dbReference>
<dbReference type="PIRSF" id="PIRSF001589">
    <property type="entry name" value="Asn_synthetase_glu-h"/>
    <property type="match status" value="1"/>
</dbReference>
<dbReference type="SUPFAM" id="SSF52402">
    <property type="entry name" value="Adenine nucleotide alpha hydrolases-like"/>
    <property type="match status" value="1"/>
</dbReference>
<dbReference type="SUPFAM" id="SSF56235">
    <property type="entry name" value="N-terminal nucleophile aminohydrolases (Ntn hydrolases)"/>
    <property type="match status" value="1"/>
</dbReference>
<dbReference type="PROSITE" id="PS51278">
    <property type="entry name" value="GATASE_TYPE_2"/>
    <property type="match status" value="1"/>
</dbReference>
<evidence type="ECO:0000250" key="1"/>
<evidence type="ECO:0000255" key="2">
    <source>
        <dbReference type="PROSITE-ProRule" id="PRU00609"/>
    </source>
</evidence>
<evidence type="ECO:0000305" key="3"/>
<accession>Q58456</accession>
<reference key="1">
    <citation type="journal article" date="1996" name="Science">
        <title>Complete genome sequence of the methanogenic archaeon, Methanococcus jannaschii.</title>
        <authorList>
            <person name="Bult C.J."/>
            <person name="White O."/>
            <person name="Olsen G.J."/>
            <person name="Zhou L."/>
            <person name="Fleischmann R.D."/>
            <person name="Sutton G.G."/>
            <person name="Blake J.A."/>
            <person name="FitzGerald L.M."/>
            <person name="Clayton R.A."/>
            <person name="Gocayne J.D."/>
            <person name="Kerlavage A.R."/>
            <person name="Dougherty B.A."/>
            <person name="Tomb J.-F."/>
            <person name="Adams M.D."/>
            <person name="Reich C.I."/>
            <person name="Overbeek R."/>
            <person name="Kirkness E.F."/>
            <person name="Weinstock K.G."/>
            <person name="Merrick J.M."/>
            <person name="Glodek A."/>
            <person name="Scott J.L."/>
            <person name="Geoghagen N.S.M."/>
            <person name="Weidman J.F."/>
            <person name="Fuhrmann J.L."/>
            <person name="Nguyen D."/>
            <person name="Utterback T.R."/>
            <person name="Kelley J.M."/>
            <person name="Peterson J.D."/>
            <person name="Sadow P.W."/>
            <person name="Hanna M.C."/>
            <person name="Cotton M.D."/>
            <person name="Roberts K.M."/>
            <person name="Hurst M.A."/>
            <person name="Kaine B.P."/>
            <person name="Borodovsky M."/>
            <person name="Klenk H.-P."/>
            <person name="Fraser C.M."/>
            <person name="Smith H.O."/>
            <person name="Woese C.R."/>
            <person name="Venter J.C."/>
        </authorList>
    </citation>
    <scope>NUCLEOTIDE SEQUENCE [LARGE SCALE GENOMIC DNA]</scope>
    <source>
        <strain>ATCC 43067 / DSM 2661 / JAL-1 / JCM 10045 / NBRC 100440</strain>
    </source>
</reference>
<feature type="initiator methionine" description="Removed" evidence="1">
    <location>
        <position position="1"/>
    </location>
</feature>
<feature type="chain" id="PRO_0000056938" description="Putative asparagine synthetase [glutamine-hydrolyzing] 2">
    <location>
        <begin position="2"/>
        <end position="515"/>
    </location>
</feature>
<feature type="domain" description="Glutamine amidotransferase type-2" evidence="2">
    <location>
        <begin position="2"/>
        <end position="229"/>
    </location>
</feature>
<feature type="active site" description="For GATase activity" evidence="1">
    <location>
        <position position="2"/>
    </location>
</feature>
<feature type="binding site" evidence="1">
    <location>
        <begin position="52"/>
        <end position="56"/>
    </location>
    <ligand>
        <name>L-glutamine</name>
        <dbReference type="ChEBI" id="CHEBI:58359"/>
    </ligand>
</feature>
<feature type="binding site" evidence="1">
    <location>
        <begin position="92"/>
        <end position="94"/>
    </location>
    <ligand>
        <name>L-glutamine</name>
        <dbReference type="ChEBI" id="CHEBI:58359"/>
    </ligand>
</feature>
<feature type="binding site" evidence="1">
    <location>
        <position position="114"/>
    </location>
    <ligand>
        <name>L-glutamine</name>
        <dbReference type="ChEBI" id="CHEBI:58359"/>
    </ligand>
</feature>
<feature type="binding site" evidence="1">
    <location>
        <position position="306"/>
    </location>
    <ligand>
        <name>ATP</name>
        <dbReference type="ChEBI" id="CHEBI:30616"/>
    </ligand>
</feature>
<feature type="binding site" evidence="1">
    <location>
        <begin position="378"/>
        <end position="379"/>
    </location>
    <ligand>
        <name>ATP</name>
        <dbReference type="ChEBI" id="CHEBI:30616"/>
    </ligand>
</feature>
<feature type="site" description="Important for beta-aspartyl-AMP intermediate formation" evidence="1">
    <location>
        <position position="380"/>
    </location>
</feature>
<keyword id="KW-0028">Amino-acid biosynthesis</keyword>
<keyword id="KW-0061">Asparagine biosynthesis</keyword>
<keyword id="KW-0067">ATP-binding</keyword>
<keyword id="KW-0315">Glutamine amidotransferase</keyword>
<keyword id="KW-0436">Ligase</keyword>
<keyword id="KW-0547">Nucleotide-binding</keyword>
<keyword id="KW-1185">Reference proteome</keyword>
<organism>
    <name type="scientific">Methanocaldococcus jannaschii (strain ATCC 43067 / DSM 2661 / JAL-1 / JCM 10045 / NBRC 100440)</name>
    <name type="common">Methanococcus jannaschii</name>
    <dbReference type="NCBI Taxonomy" id="243232"/>
    <lineage>
        <taxon>Archaea</taxon>
        <taxon>Methanobacteriati</taxon>
        <taxon>Methanobacteriota</taxon>
        <taxon>Methanomada group</taxon>
        <taxon>Methanococci</taxon>
        <taxon>Methanococcales</taxon>
        <taxon>Methanocaldococcaceae</taxon>
        <taxon>Methanocaldococcus</taxon>
    </lineage>
</organism>
<comment type="catalytic activity">
    <reaction>
        <text>L-aspartate + L-glutamine + ATP + H2O = L-asparagine + L-glutamate + AMP + diphosphate + H(+)</text>
        <dbReference type="Rhea" id="RHEA:12228"/>
        <dbReference type="ChEBI" id="CHEBI:15377"/>
        <dbReference type="ChEBI" id="CHEBI:15378"/>
        <dbReference type="ChEBI" id="CHEBI:29985"/>
        <dbReference type="ChEBI" id="CHEBI:29991"/>
        <dbReference type="ChEBI" id="CHEBI:30616"/>
        <dbReference type="ChEBI" id="CHEBI:33019"/>
        <dbReference type="ChEBI" id="CHEBI:58048"/>
        <dbReference type="ChEBI" id="CHEBI:58359"/>
        <dbReference type="ChEBI" id="CHEBI:456215"/>
        <dbReference type="EC" id="6.3.5.4"/>
    </reaction>
</comment>
<comment type="pathway">
    <text>Amino-acid biosynthesis; L-asparagine biosynthesis; L-asparagine from L-aspartate (L-Gln route): step 1/1.</text>
</comment>
<comment type="similarity">
    <text evidence="3">Belongs to the asparagine synthetase family.</text>
</comment>
<comment type="sequence caution" evidence="3">
    <conflict type="erroneous initiation">
        <sequence resource="EMBL-CDS" id="AAB99058"/>
    </conflict>
</comment>
<proteinExistence type="inferred from homology"/>
<sequence>MCGINGIIRFGKEVIKEEINKMNKAIKHRGPDDEGIFIYNFKNYSIGLGHVRLAILDLSEKGHQPMGYNVDEDKIIYRDDELDRADIIIVYNGEIYNYLELKEKFNLETETGTDTEVILKLYNKLGFDCVKEFNGMWAFCIFDKKKGLIFCSRDRLGVKPFYYYWDGNEFIFSSELKGILAVKEINKKENINKDAVELYFALGFIPSPYSIYKNTFKLEARQNLIFDLDKREIRKYYYWELPDYKPIYDKKKLIEEGKKLLYDAVKIRMRSDVPVGAFLSGGLDSSTVVGVMREFTDLSKLHTFSIGFEGKYDETPYIKIVVDYFKTQHHHYYFKERDFEELIDKYSWIYDEPFGDYSGFPTYKVSEMARKFVTVVLSGDGGDEVFGGYMTHLNGYRMDFIRKLPKFLRVVGSKLPVKKDLNGIANLYLLKEAFRLSLINPEEFYAESIKEDAIRPEIYKKWTIEKLRYCLNKGDNKLGEALRIFDLLFNTLCDNFLVKVDRASMLTLWKLEVHF</sequence>
<gene>
    <name type="ordered locus">MJ1056</name>
</gene>
<name>ASNH2_METJA</name>